<protein>
    <recommendedName>
        <fullName evidence="1">Imidazole glycerol phosphate synthase subunit HisH</fullName>
        <ecNumber evidence="1">4.3.2.10</ecNumber>
    </recommendedName>
    <alternativeName>
        <fullName evidence="1">IGP synthase glutaminase subunit</fullName>
        <ecNumber evidence="1">3.5.1.2</ecNumber>
    </alternativeName>
    <alternativeName>
        <fullName evidence="1">IGP synthase subunit HisH</fullName>
    </alternativeName>
    <alternativeName>
        <fullName evidence="1">ImGP synthase subunit HisH</fullName>
        <shortName evidence="1">IGPS subunit HisH</shortName>
    </alternativeName>
</protein>
<evidence type="ECO:0000255" key="1">
    <source>
        <dbReference type="HAMAP-Rule" id="MF_00278"/>
    </source>
</evidence>
<comment type="function">
    <text evidence="1">IGPS catalyzes the conversion of PRFAR and glutamine to IGP, AICAR and glutamate. The HisH subunit catalyzes the hydrolysis of glutamine to glutamate and ammonia as part of the synthesis of IGP and AICAR. The resulting ammonia molecule is channeled to the active site of HisF.</text>
</comment>
<comment type="catalytic activity">
    <reaction evidence="1">
        <text>5-[(5-phospho-1-deoxy-D-ribulos-1-ylimino)methylamino]-1-(5-phospho-beta-D-ribosyl)imidazole-4-carboxamide + L-glutamine = D-erythro-1-(imidazol-4-yl)glycerol 3-phosphate + 5-amino-1-(5-phospho-beta-D-ribosyl)imidazole-4-carboxamide + L-glutamate + H(+)</text>
        <dbReference type="Rhea" id="RHEA:24793"/>
        <dbReference type="ChEBI" id="CHEBI:15378"/>
        <dbReference type="ChEBI" id="CHEBI:29985"/>
        <dbReference type="ChEBI" id="CHEBI:58278"/>
        <dbReference type="ChEBI" id="CHEBI:58359"/>
        <dbReference type="ChEBI" id="CHEBI:58475"/>
        <dbReference type="ChEBI" id="CHEBI:58525"/>
        <dbReference type="EC" id="4.3.2.10"/>
    </reaction>
</comment>
<comment type="catalytic activity">
    <reaction evidence="1">
        <text>L-glutamine + H2O = L-glutamate + NH4(+)</text>
        <dbReference type="Rhea" id="RHEA:15889"/>
        <dbReference type="ChEBI" id="CHEBI:15377"/>
        <dbReference type="ChEBI" id="CHEBI:28938"/>
        <dbReference type="ChEBI" id="CHEBI:29985"/>
        <dbReference type="ChEBI" id="CHEBI:58359"/>
        <dbReference type="EC" id="3.5.1.2"/>
    </reaction>
</comment>
<comment type="pathway">
    <text evidence="1">Amino-acid biosynthesis; L-histidine biosynthesis; L-histidine from 5-phospho-alpha-D-ribose 1-diphosphate: step 5/9.</text>
</comment>
<comment type="subunit">
    <text evidence="1">Heterodimer of HisH and HisF.</text>
</comment>
<comment type="subcellular location">
    <subcellularLocation>
        <location evidence="1">Cytoplasm</location>
    </subcellularLocation>
</comment>
<name>HIS5_XYLFT</name>
<dbReference type="EC" id="4.3.2.10" evidence="1"/>
<dbReference type="EC" id="3.5.1.2" evidence="1"/>
<dbReference type="EMBL" id="AE009442">
    <property type="protein sequence ID" value="AAO29113.1"/>
    <property type="molecule type" value="Genomic_DNA"/>
</dbReference>
<dbReference type="RefSeq" id="WP_004088317.1">
    <property type="nucleotide sequence ID" value="NC_004556.1"/>
</dbReference>
<dbReference type="SMR" id="Q87C32"/>
<dbReference type="GeneID" id="93905075"/>
<dbReference type="KEGG" id="xft:PD_1264"/>
<dbReference type="HOGENOM" id="CLU_071837_0_0_6"/>
<dbReference type="UniPathway" id="UPA00031">
    <property type="reaction ID" value="UER00010"/>
</dbReference>
<dbReference type="Proteomes" id="UP000002516">
    <property type="component" value="Chromosome"/>
</dbReference>
<dbReference type="GO" id="GO:0005737">
    <property type="term" value="C:cytoplasm"/>
    <property type="evidence" value="ECO:0007669"/>
    <property type="project" value="UniProtKB-SubCell"/>
</dbReference>
<dbReference type="GO" id="GO:0004359">
    <property type="term" value="F:glutaminase activity"/>
    <property type="evidence" value="ECO:0007669"/>
    <property type="project" value="UniProtKB-EC"/>
</dbReference>
<dbReference type="GO" id="GO:0000107">
    <property type="term" value="F:imidazoleglycerol-phosphate synthase activity"/>
    <property type="evidence" value="ECO:0007669"/>
    <property type="project" value="UniProtKB-UniRule"/>
</dbReference>
<dbReference type="GO" id="GO:0016829">
    <property type="term" value="F:lyase activity"/>
    <property type="evidence" value="ECO:0007669"/>
    <property type="project" value="UniProtKB-KW"/>
</dbReference>
<dbReference type="GO" id="GO:0000105">
    <property type="term" value="P:L-histidine biosynthetic process"/>
    <property type="evidence" value="ECO:0007669"/>
    <property type="project" value="UniProtKB-UniRule"/>
</dbReference>
<dbReference type="CDD" id="cd01748">
    <property type="entry name" value="GATase1_IGP_Synthase"/>
    <property type="match status" value="1"/>
</dbReference>
<dbReference type="FunFam" id="3.40.50.880:FF:000009">
    <property type="entry name" value="Imidazole glycerol phosphate synthase subunit HisH"/>
    <property type="match status" value="1"/>
</dbReference>
<dbReference type="Gene3D" id="3.40.50.880">
    <property type="match status" value="1"/>
</dbReference>
<dbReference type="HAMAP" id="MF_00278">
    <property type="entry name" value="HisH"/>
    <property type="match status" value="1"/>
</dbReference>
<dbReference type="InterPro" id="IPR029062">
    <property type="entry name" value="Class_I_gatase-like"/>
</dbReference>
<dbReference type="InterPro" id="IPR017926">
    <property type="entry name" value="GATASE"/>
</dbReference>
<dbReference type="InterPro" id="IPR010139">
    <property type="entry name" value="Imidazole-glycPsynth_HisH"/>
</dbReference>
<dbReference type="NCBIfam" id="TIGR01855">
    <property type="entry name" value="IMP_synth_hisH"/>
    <property type="match status" value="1"/>
</dbReference>
<dbReference type="PANTHER" id="PTHR42701">
    <property type="entry name" value="IMIDAZOLE GLYCEROL PHOSPHATE SYNTHASE SUBUNIT HISH"/>
    <property type="match status" value="1"/>
</dbReference>
<dbReference type="PANTHER" id="PTHR42701:SF1">
    <property type="entry name" value="IMIDAZOLE GLYCEROL PHOSPHATE SYNTHASE SUBUNIT HISH"/>
    <property type="match status" value="1"/>
</dbReference>
<dbReference type="Pfam" id="PF00117">
    <property type="entry name" value="GATase"/>
    <property type="match status" value="1"/>
</dbReference>
<dbReference type="PIRSF" id="PIRSF000495">
    <property type="entry name" value="Amidotransf_hisH"/>
    <property type="match status" value="1"/>
</dbReference>
<dbReference type="PRINTS" id="PR00097">
    <property type="entry name" value="ANTSNTHASEII"/>
</dbReference>
<dbReference type="SUPFAM" id="SSF52317">
    <property type="entry name" value="Class I glutamine amidotransferase-like"/>
    <property type="match status" value="1"/>
</dbReference>
<dbReference type="PROSITE" id="PS51273">
    <property type="entry name" value="GATASE_TYPE_1"/>
    <property type="match status" value="1"/>
</dbReference>
<keyword id="KW-0028">Amino-acid biosynthesis</keyword>
<keyword id="KW-0963">Cytoplasm</keyword>
<keyword id="KW-0315">Glutamine amidotransferase</keyword>
<keyword id="KW-0368">Histidine biosynthesis</keyword>
<keyword id="KW-0378">Hydrolase</keyword>
<keyword id="KW-0456">Lyase</keyword>
<keyword id="KW-1185">Reference proteome</keyword>
<sequence>MTEVALIDAGGANLGSVRYALQRLGVEPRLVCDARGLEGAARVILPGVGSAPEAMARLNNQGLIEPLLRLQVPLIGICLGMQLLFEHSEEGDVPCLGLLPGRVRRLTPAPSIRVPHMGWNRLLPLRASPLLAEVPEGANAYFVHSYAVPLTTAAVAACDHGGMFTAIVQQGVRCGAQFHPERSAETGARILRNFLEMDAA</sequence>
<feature type="chain" id="PRO_0000152451" description="Imidazole glycerol phosphate synthase subunit HisH">
    <location>
        <begin position="1"/>
        <end position="200"/>
    </location>
</feature>
<feature type="domain" description="Glutamine amidotransferase type-1" evidence="1">
    <location>
        <begin position="3"/>
        <end position="200"/>
    </location>
</feature>
<feature type="active site" description="Nucleophile" evidence="1">
    <location>
        <position position="78"/>
    </location>
</feature>
<feature type="active site" evidence="1">
    <location>
        <position position="179"/>
    </location>
</feature>
<feature type="active site" evidence="1">
    <location>
        <position position="181"/>
    </location>
</feature>
<proteinExistence type="inferred from homology"/>
<accession>Q87C32</accession>
<reference key="1">
    <citation type="journal article" date="2003" name="J. Bacteriol.">
        <title>Comparative analyses of the complete genome sequences of Pierce's disease and citrus variegated chlorosis strains of Xylella fastidiosa.</title>
        <authorList>
            <person name="Van Sluys M.A."/>
            <person name="de Oliveira M.C."/>
            <person name="Monteiro-Vitorello C.B."/>
            <person name="Miyaki C.Y."/>
            <person name="Furlan L.R."/>
            <person name="Camargo L.E.A."/>
            <person name="da Silva A.C.R."/>
            <person name="Moon D.H."/>
            <person name="Takita M.A."/>
            <person name="Lemos E.G.M."/>
            <person name="Machado M.A."/>
            <person name="Ferro M.I.T."/>
            <person name="da Silva F.R."/>
            <person name="Goldman M.H.S."/>
            <person name="Goldman G.H."/>
            <person name="Lemos M.V.F."/>
            <person name="El-Dorry H."/>
            <person name="Tsai S.M."/>
            <person name="Carrer H."/>
            <person name="Carraro D.M."/>
            <person name="de Oliveira R.C."/>
            <person name="Nunes L.R."/>
            <person name="Siqueira W.J."/>
            <person name="Coutinho L.L."/>
            <person name="Kimura E.T."/>
            <person name="Ferro E.S."/>
            <person name="Harakava R."/>
            <person name="Kuramae E.E."/>
            <person name="Marino C.L."/>
            <person name="Giglioti E."/>
            <person name="Abreu I.L."/>
            <person name="Alves L.M.C."/>
            <person name="do Amaral A.M."/>
            <person name="Baia G.S."/>
            <person name="Blanco S.R."/>
            <person name="Brito M.S."/>
            <person name="Cannavan F.S."/>
            <person name="Celestino A.V."/>
            <person name="da Cunha A.F."/>
            <person name="Fenille R.C."/>
            <person name="Ferro J.A."/>
            <person name="Formighieri E.F."/>
            <person name="Kishi L.T."/>
            <person name="Leoni S.G."/>
            <person name="Oliveira A.R."/>
            <person name="Rosa V.E. Jr."/>
            <person name="Sassaki F.T."/>
            <person name="Sena J.A.D."/>
            <person name="de Souza A.A."/>
            <person name="Truffi D."/>
            <person name="Tsukumo F."/>
            <person name="Yanai G.M."/>
            <person name="Zaros L.G."/>
            <person name="Civerolo E.L."/>
            <person name="Simpson A.J.G."/>
            <person name="Almeida N.F. Jr."/>
            <person name="Setubal J.C."/>
            <person name="Kitajima J.P."/>
        </authorList>
    </citation>
    <scope>NUCLEOTIDE SEQUENCE [LARGE SCALE GENOMIC DNA]</scope>
    <source>
        <strain>Temecula1 / ATCC 700964</strain>
    </source>
</reference>
<organism>
    <name type="scientific">Xylella fastidiosa (strain Temecula1 / ATCC 700964)</name>
    <dbReference type="NCBI Taxonomy" id="183190"/>
    <lineage>
        <taxon>Bacteria</taxon>
        <taxon>Pseudomonadati</taxon>
        <taxon>Pseudomonadota</taxon>
        <taxon>Gammaproteobacteria</taxon>
        <taxon>Lysobacterales</taxon>
        <taxon>Lysobacteraceae</taxon>
        <taxon>Xylella</taxon>
    </lineage>
</organism>
<gene>
    <name evidence="1" type="primary">hisH</name>
    <name type="ordered locus">PD_1264</name>
</gene>